<accession>A4STP7</accession>
<reference key="1">
    <citation type="journal article" date="2008" name="BMC Genomics">
        <title>The genome of Aeromonas salmonicida subsp. salmonicida A449: insights into the evolution of a fish pathogen.</title>
        <authorList>
            <person name="Reith M.E."/>
            <person name="Singh R.K."/>
            <person name="Curtis B."/>
            <person name="Boyd J.M."/>
            <person name="Bouevitch A."/>
            <person name="Kimball J."/>
            <person name="Munholland J."/>
            <person name="Murphy C."/>
            <person name="Sarty D."/>
            <person name="Williams J."/>
            <person name="Nash J.H."/>
            <person name="Johnson S.C."/>
            <person name="Brown L.L."/>
        </authorList>
    </citation>
    <scope>NUCLEOTIDE SEQUENCE [LARGE SCALE GENOMIC DNA]</scope>
    <source>
        <strain>A449</strain>
    </source>
</reference>
<dbReference type="EMBL" id="CP000644">
    <property type="protein sequence ID" value="ABO92269.1"/>
    <property type="molecule type" value="Genomic_DNA"/>
</dbReference>
<dbReference type="RefSeq" id="WP_005319619.1">
    <property type="nucleotide sequence ID" value="NC_009348.1"/>
</dbReference>
<dbReference type="SMR" id="A4STP7"/>
<dbReference type="STRING" id="29491.GCA_000820065_00587"/>
<dbReference type="GeneID" id="79882025"/>
<dbReference type="KEGG" id="asa:ASA_4354"/>
<dbReference type="eggNOG" id="COG0711">
    <property type="taxonomic scope" value="Bacteria"/>
</dbReference>
<dbReference type="HOGENOM" id="CLU_079215_4_5_6"/>
<dbReference type="Proteomes" id="UP000000225">
    <property type="component" value="Chromosome"/>
</dbReference>
<dbReference type="GO" id="GO:0005886">
    <property type="term" value="C:plasma membrane"/>
    <property type="evidence" value="ECO:0007669"/>
    <property type="project" value="UniProtKB-SubCell"/>
</dbReference>
<dbReference type="GO" id="GO:0045259">
    <property type="term" value="C:proton-transporting ATP synthase complex"/>
    <property type="evidence" value="ECO:0007669"/>
    <property type="project" value="UniProtKB-KW"/>
</dbReference>
<dbReference type="GO" id="GO:0046933">
    <property type="term" value="F:proton-transporting ATP synthase activity, rotational mechanism"/>
    <property type="evidence" value="ECO:0007669"/>
    <property type="project" value="UniProtKB-UniRule"/>
</dbReference>
<dbReference type="GO" id="GO:0046961">
    <property type="term" value="F:proton-transporting ATPase activity, rotational mechanism"/>
    <property type="evidence" value="ECO:0007669"/>
    <property type="project" value="TreeGrafter"/>
</dbReference>
<dbReference type="CDD" id="cd06503">
    <property type="entry name" value="ATP-synt_Fo_b"/>
    <property type="match status" value="1"/>
</dbReference>
<dbReference type="FunFam" id="1.20.5.620:FF:000001">
    <property type="entry name" value="ATP synthase subunit b"/>
    <property type="match status" value="1"/>
</dbReference>
<dbReference type="Gene3D" id="1.20.5.620">
    <property type="entry name" value="F1F0 ATP synthase subunit B, membrane domain"/>
    <property type="match status" value="1"/>
</dbReference>
<dbReference type="HAMAP" id="MF_01398">
    <property type="entry name" value="ATP_synth_b_bprime"/>
    <property type="match status" value="1"/>
</dbReference>
<dbReference type="InterPro" id="IPR028987">
    <property type="entry name" value="ATP_synth_B-like_membr_sf"/>
</dbReference>
<dbReference type="InterPro" id="IPR002146">
    <property type="entry name" value="ATP_synth_b/b'su_bac/chlpt"/>
</dbReference>
<dbReference type="InterPro" id="IPR005864">
    <property type="entry name" value="ATP_synth_F0_bsu_bac"/>
</dbReference>
<dbReference type="InterPro" id="IPR050059">
    <property type="entry name" value="ATP_synthase_B_chain"/>
</dbReference>
<dbReference type="NCBIfam" id="TIGR01144">
    <property type="entry name" value="ATP_synt_b"/>
    <property type="match status" value="1"/>
</dbReference>
<dbReference type="NCBIfam" id="NF004411">
    <property type="entry name" value="PRK05759.1-2"/>
    <property type="match status" value="1"/>
</dbReference>
<dbReference type="NCBIfam" id="NF004413">
    <property type="entry name" value="PRK05759.1-4"/>
    <property type="match status" value="1"/>
</dbReference>
<dbReference type="PANTHER" id="PTHR33445:SF1">
    <property type="entry name" value="ATP SYNTHASE SUBUNIT B"/>
    <property type="match status" value="1"/>
</dbReference>
<dbReference type="PANTHER" id="PTHR33445">
    <property type="entry name" value="ATP SYNTHASE SUBUNIT B', CHLOROPLASTIC"/>
    <property type="match status" value="1"/>
</dbReference>
<dbReference type="Pfam" id="PF00430">
    <property type="entry name" value="ATP-synt_B"/>
    <property type="match status" value="1"/>
</dbReference>
<dbReference type="SUPFAM" id="SSF81573">
    <property type="entry name" value="F1F0 ATP synthase subunit B, membrane domain"/>
    <property type="match status" value="1"/>
</dbReference>
<proteinExistence type="inferred from homology"/>
<comment type="function">
    <text evidence="1">F(1)F(0) ATP synthase produces ATP from ADP in the presence of a proton or sodium gradient. F-type ATPases consist of two structural domains, F(1) containing the extramembraneous catalytic core and F(0) containing the membrane proton channel, linked together by a central stalk and a peripheral stalk. During catalysis, ATP synthesis in the catalytic domain of F(1) is coupled via a rotary mechanism of the central stalk subunits to proton translocation.</text>
</comment>
<comment type="function">
    <text evidence="1">Component of the F(0) channel, it forms part of the peripheral stalk, linking F(1) to F(0).</text>
</comment>
<comment type="subunit">
    <text evidence="1">F-type ATPases have 2 components, F(1) - the catalytic core - and F(0) - the membrane proton channel. F(1) has five subunits: alpha(3), beta(3), gamma(1), delta(1), epsilon(1). F(0) has three main subunits: a(1), b(2) and c(10-14). The alpha and beta chains form an alternating ring which encloses part of the gamma chain. F(1) is attached to F(0) by a central stalk formed by the gamma and epsilon chains, while a peripheral stalk is formed by the delta and b chains.</text>
</comment>
<comment type="subcellular location">
    <subcellularLocation>
        <location evidence="1">Cell inner membrane</location>
        <topology evidence="1">Single-pass membrane protein</topology>
    </subcellularLocation>
</comment>
<comment type="similarity">
    <text evidence="1">Belongs to the ATPase B chain family.</text>
</comment>
<feature type="chain" id="PRO_0000368300" description="ATP synthase subunit b">
    <location>
        <begin position="1"/>
        <end position="156"/>
    </location>
</feature>
<feature type="transmembrane region" description="Helical" evidence="1">
    <location>
        <begin position="13"/>
        <end position="33"/>
    </location>
</feature>
<name>ATPF_AERS4</name>
<evidence type="ECO:0000255" key="1">
    <source>
        <dbReference type="HAMAP-Rule" id="MF_01398"/>
    </source>
</evidence>
<protein>
    <recommendedName>
        <fullName evidence="1">ATP synthase subunit b</fullName>
    </recommendedName>
    <alternativeName>
        <fullName evidence="1">ATP synthase F(0) sector subunit b</fullName>
    </alternativeName>
    <alternativeName>
        <fullName evidence="1">ATPase subunit I</fullName>
    </alternativeName>
    <alternativeName>
        <fullName evidence="1">F-type ATPase subunit b</fullName>
        <shortName evidence="1">F-ATPase subunit b</shortName>
    </alternativeName>
</protein>
<gene>
    <name evidence="1" type="primary">atpF</name>
    <name type="ordered locus">ASA_4354</name>
</gene>
<sequence length="156" mass="17063">MSINATLLGQTLAFIIFVWCCMKFVWPPLMAAIEARQKAIADGLSSAERAKKDLDLAKANATDQLKEAKLQAAQIIEQANKRKAQIIDEAAVGAHTEREKILAQGRAEIDAERHRAKEELRKQVAALAIAGAEKILARHIDQAANSDIVDKLVAEL</sequence>
<organism>
    <name type="scientific">Aeromonas salmonicida (strain A449)</name>
    <dbReference type="NCBI Taxonomy" id="382245"/>
    <lineage>
        <taxon>Bacteria</taxon>
        <taxon>Pseudomonadati</taxon>
        <taxon>Pseudomonadota</taxon>
        <taxon>Gammaproteobacteria</taxon>
        <taxon>Aeromonadales</taxon>
        <taxon>Aeromonadaceae</taxon>
        <taxon>Aeromonas</taxon>
    </lineage>
</organism>
<keyword id="KW-0066">ATP synthesis</keyword>
<keyword id="KW-0997">Cell inner membrane</keyword>
<keyword id="KW-1003">Cell membrane</keyword>
<keyword id="KW-0138">CF(0)</keyword>
<keyword id="KW-0375">Hydrogen ion transport</keyword>
<keyword id="KW-0406">Ion transport</keyword>
<keyword id="KW-0472">Membrane</keyword>
<keyword id="KW-0812">Transmembrane</keyword>
<keyword id="KW-1133">Transmembrane helix</keyword>
<keyword id="KW-0813">Transport</keyword>